<comment type="function">
    <text evidence="3">Involved in the cyanide detoxification pathway. Has nitrilase and nitrile-hydratase activity in the ratio 3.3:1, producing both asparagine and aspartic acid from beta-cyano-L-alanine (Ala(CN)). Can also use 3-phenylpropionitrile as substrate, but not indole-3-acetonitrile.</text>
</comment>
<comment type="catalytic activity">
    <reaction evidence="3">
        <text>L-asparagine = 3-cyano-L-alanine + H2O</text>
        <dbReference type="Rhea" id="RHEA:15385"/>
        <dbReference type="ChEBI" id="CHEBI:15377"/>
        <dbReference type="ChEBI" id="CHEBI:58048"/>
        <dbReference type="ChEBI" id="CHEBI:77860"/>
        <dbReference type="EC" id="4.2.1.65"/>
    </reaction>
</comment>
<comment type="catalytic activity">
    <reaction evidence="3">
        <text>3-cyano-L-alanine + 2 H2O = L-aspartate + NH4(+)</text>
        <dbReference type="Rhea" id="RHEA:11188"/>
        <dbReference type="ChEBI" id="CHEBI:15377"/>
        <dbReference type="ChEBI" id="CHEBI:28938"/>
        <dbReference type="ChEBI" id="CHEBI:29991"/>
        <dbReference type="ChEBI" id="CHEBI:77860"/>
        <dbReference type="EC" id="3.5.5.4"/>
    </reaction>
</comment>
<comment type="biophysicochemical properties">
    <kinetics>
        <KM evidence="3">0.93 mM for Ala(CN)</KM>
        <Vmax evidence="3">114.6 nmol/sec/mg enzyme for the nitrilase activity</Vmax>
    </kinetics>
</comment>
<comment type="tissue specificity">
    <text evidence="3">Highly expressed in leaves and cotyledons, lower expression in stems and roots.</text>
</comment>
<comment type="similarity">
    <text evidence="4">Belongs to the carbon-nitrogen hydrolase superfamily. Nitrilase family.</text>
</comment>
<gene>
    <name type="primary">NIT4B</name>
</gene>
<feature type="chain" id="PRO_0000430147" description="Bifunctional nitrilase/nitrile hydratase NIT4B">
    <location>
        <begin position="1"/>
        <end position="350"/>
    </location>
</feature>
<feature type="domain" description="CN hydrolase" evidence="1">
    <location>
        <begin position="30"/>
        <end position="302"/>
    </location>
</feature>
<feature type="active site" description="Proton acceptor" evidence="1">
    <location>
        <position position="70"/>
    </location>
</feature>
<feature type="active site" evidence="1">
    <location>
        <position position="157"/>
    </location>
</feature>
<feature type="active site" description="Nucleophile" evidence="1 2">
    <location>
        <position position="191"/>
    </location>
</feature>
<dbReference type="EC" id="3.5.5.4"/>
<dbReference type="EC" id="4.2.1.65"/>
<dbReference type="EMBL" id="DQ186678">
    <property type="protein sequence ID" value="ABA28312.1"/>
    <property type="molecule type" value="mRNA"/>
</dbReference>
<dbReference type="EMBL" id="DQ241760">
    <property type="protein sequence ID" value="ABB51980.1"/>
    <property type="molecule type" value="Genomic_DNA"/>
</dbReference>
<dbReference type="RefSeq" id="XP_019451519.1">
    <property type="nucleotide sequence ID" value="XM_019595974.1"/>
</dbReference>
<dbReference type="SMR" id="Q3LRV4"/>
<dbReference type="EnsemblPlants" id="OIW05882">
    <property type="protein sequence ID" value="OIW05882"/>
    <property type="gene ID" value="TanjilG_23668"/>
</dbReference>
<dbReference type="GeneID" id="109353638"/>
<dbReference type="Gramene" id="OIW05882">
    <property type="protein sequence ID" value="OIW05882"/>
    <property type="gene ID" value="TanjilG_23668"/>
</dbReference>
<dbReference type="KEGG" id="lang:109353638"/>
<dbReference type="OrthoDB" id="10250282at2759"/>
<dbReference type="BioCyc" id="MetaCyc:MONOMER-17622"/>
<dbReference type="BRENDA" id="3.5.5.4">
    <property type="organism ID" value="3090"/>
</dbReference>
<dbReference type="SABIO-RK" id="Q3LRV4"/>
<dbReference type="GO" id="GO:0047558">
    <property type="term" value="F:3-cyanoalanine hydratase activity"/>
    <property type="evidence" value="ECO:0000314"/>
    <property type="project" value="UniProtKB"/>
</dbReference>
<dbReference type="GO" id="GO:0047427">
    <property type="term" value="F:cyanoalanine nitrilase activity"/>
    <property type="evidence" value="ECO:0000314"/>
    <property type="project" value="UniProtKB"/>
</dbReference>
<dbReference type="GO" id="GO:0018822">
    <property type="term" value="F:nitrile hydratase activity"/>
    <property type="evidence" value="ECO:0007669"/>
    <property type="project" value="TreeGrafter"/>
</dbReference>
<dbReference type="GO" id="GO:0019500">
    <property type="term" value="P:cyanide catabolic process"/>
    <property type="evidence" value="ECO:0000314"/>
    <property type="project" value="UniProtKB"/>
</dbReference>
<dbReference type="GO" id="GO:0051410">
    <property type="term" value="P:detoxification of nitrogen compound"/>
    <property type="evidence" value="ECO:0000314"/>
    <property type="project" value="UniProtKB"/>
</dbReference>
<dbReference type="CDD" id="cd07564">
    <property type="entry name" value="nitrilases_CHs"/>
    <property type="match status" value="1"/>
</dbReference>
<dbReference type="FunFam" id="3.60.110.10:FF:000006">
    <property type="entry name" value="Bifunctional nitrilase/nitrile hydratase NIT4B"/>
    <property type="match status" value="1"/>
</dbReference>
<dbReference type="Gene3D" id="3.60.110.10">
    <property type="entry name" value="Carbon-nitrogen hydrolase"/>
    <property type="match status" value="1"/>
</dbReference>
<dbReference type="InterPro" id="IPR003010">
    <property type="entry name" value="C-N_Hydrolase"/>
</dbReference>
<dbReference type="InterPro" id="IPR036526">
    <property type="entry name" value="C-N_Hydrolase_sf"/>
</dbReference>
<dbReference type="InterPro" id="IPR000132">
    <property type="entry name" value="Nitrilase/CN_hydratase_CS"/>
</dbReference>
<dbReference type="InterPro" id="IPR044149">
    <property type="entry name" value="Nitrilases_CHs"/>
</dbReference>
<dbReference type="PANTHER" id="PTHR46044:SF1">
    <property type="entry name" value="CN HYDROLASE DOMAIN-CONTAINING PROTEIN"/>
    <property type="match status" value="1"/>
</dbReference>
<dbReference type="PANTHER" id="PTHR46044">
    <property type="entry name" value="NITRILASE"/>
    <property type="match status" value="1"/>
</dbReference>
<dbReference type="Pfam" id="PF00795">
    <property type="entry name" value="CN_hydrolase"/>
    <property type="match status" value="1"/>
</dbReference>
<dbReference type="SUPFAM" id="SSF56317">
    <property type="entry name" value="Carbon-nitrogen hydrolase"/>
    <property type="match status" value="1"/>
</dbReference>
<dbReference type="PROSITE" id="PS50263">
    <property type="entry name" value="CN_HYDROLASE"/>
    <property type="match status" value="1"/>
</dbReference>
<dbReference type="PROSITE" id="PS00920">
    <property type="entry name" value="NITRIL_CHT_1"/>
    <property type="match status" value="1"/>
</dbReference>
<dbReference type="PROSITE" id="PS00921">
    <property type="entry name" value="NITRIL_CHT_2"/>
    <property type="match status" value="1"/>
</dbReference>
<accession>Q3LRV4</accession>
<reference key="1">
    <citation type="journal article" date="2006" name="Plant Mol. Biol.">
        <title>Cyanide metabolism in higher plants: cyanoalanine hydratase is a NIT4 homolog.</title>
        <authorList>
            <person name="Piotrowski M."/>
            <person name="Volmer J.J."/>
        </authorList>
    </citation>
    <scope>NUCLEOTIDE SEQUENCE [GENOMIC DNA / MRNA]</scope>
    <scope>FUNCTION</scope>
    <scope>CATALYTIC ACTIVITY</scope>
    <scope>BIOPHYSICOCHEMICAL PROPERTIES</scope>
    <scope>TISSUE SPECIFICITY</scope>
    <source>
        <strain>cv. Azuro</strain>
    </source>
</reference>
<reference key="2">
    <citation type="journal article" date="2014" name="PLoS ONE">
        <title>Finding sequences for over 270 orphan enzymes.</title>
        <authorList>
            <person name="Shearer A.G."/>
            <person name="Altman T."/>
            <person name="Rhee C.D."/>
        </authorList>
    </citation>
    <scope>IDENTIFICATION</scope>
</reference>
<protein>
    <recommendedName>
        <fullName>Bifunctional nitrilase/nitrile hydratase NIT4B</fullName>
        <shortName>LaNIT4B</shortName>
        <ecNumber>3.5.5.4</ecNumber>
        <ecNumber>4.2.1.65</ecNumber>
    </recommendedName>
    <alternativeName>
        <fullName>3-cyanoalanine hydratase</fullName>
    </alternativeName>
    <alternativeName>
        <fullName>Cyanoalanine nitrilase B</fullName>
    </alternativeName>
</protein>
<evidence type="ECO:0000255" key="1">
    <source>
        <dbReference type="PROSITE-ProRule" id="PRU00054"/>
    </source>
</evidence>
<evidence type="ECO:0000255" key="2">
    <source>
        <dbReference type="PROSITE-ProRule" id="PRU10105"/>
    </source>
</evidence>
<evidence type="ECO:0000269" key="3">
    <source>
    </source>
</evidence>
<evidence type="ECO:0000305" key="4"/>
<sequence>MALVTTTPTVNDEPLFAEVDMASYFTSTTVRATVVQASTIFYDTPATLDKAERLLVQAASYGAQIVVFPEAFIGGYPRGSNFGVSIGNRTAKGKEEFRKYHSAAIDVPGPEVDRLSAMAGKYKVYLVMGVIERDGYTLYCTVLFFDSQGRYLGKHRKVMPTALERIIWGFGDGSTIPVFQTPIGKIGAAICWENKMPLLRTAMYAKGVEIYCAPTADSRDLWQASTTHIALEGGCFVLSANQFCRRKDYPPPPEYVFSGTEEDLTPDSVVSAGGSVIISPSGAVLAGPNYEGEALISADLDLGEIARAKFDFDVVGHYSRSEVLSLIVKDHPTNPVTFTSTSTKIEDQTK</sequence>
<keyword id="KW-0378">Hydrolase</keyword>
<keyword id="KW-0456">Lyase</keyword>
<proteinExistence type="evidence at protein level"/>
<name>NRL4B_LUPAN</name>
<organism>
    <name type="scientific">Lupinus angustifolius</name>
    <name type="common">Narrow-leaved blue lupine</name>
    <dbReference type="NCBI Taxonomy" id="3871"/>
    <lineage>
        <taxon>Eukaryota</taxon>
        <taxon>Viridiplantae</taxon>
        <taxon>Streptophyta</taxon>
        <taxon>Embryophyta</taxon>
        <taxon>Tracheophyta</taxon>
        <taxon>Spermatophyta</taxon>
        <taxon>Magnoliopsida</taxon>
        <taxon>eudicotyledons</taxon>
        <taxon>Gunneridae</taxon>
        <taxon>Pentapetalae</taxon>
        <taxon>rosids</taxon>
        <taxon>fabids</taxon>
        <taxon>Fabales</taxon>
        <taxon>Fabaceae</taxon>
        <taxon>Papilionoideae</taxon>
        <taxon>50 kb inversion clade</taxon>
        <taxon>genistoids sensu lato</taxon>
        <taxon>core genistoids</taxon>
        <taxon>Genisteae</taxon>
        <taxon>Lupinus</taxon>
    </lineage>
</organism>